<accession>A0A1D8PI71</accession>
<name>ERG9_CANAL</name>
<gene>
    <name evidence="5" type="primary">ERG9</name>
    <name type="ordered locus">orf19.3616</name>
    <name type="ORF">CAALFM_C208610WA</name>
</gene>
<dbReference type="EC" id="2.5.1.21" evidence="1"/>
<dbReference type="EMBL" id="CP017624">
    <property type="protein sequence ID" value="AOW27849.1"/>
    <property type="molecule type" value="Genomic_DNA"/>
</dbReference>
<dbReference type="RefSeq" id="XP_714460.2">
    <property type="nucleotide sequence ID" value="XM_709367.2"/>
</dbReference>
<dbReference type="SMR" id="A0A1D8PI71"/>
<dbReference type="FunCoup" id="A0A1D8PI71">
    <property type="interactions" value="330"/>
</dbReference>
<dbReference type="STRING" id="237561.A0A1D8PI71"/>
<dbReference type="EnsemblFungi" id="C2_08610W_A-T">
    <property type="protein sequence ID" value="C2_08610W_A-T-p1"/>
    <property type="gene ID" value="C2_08610W_A"/>
</dbReference>
<dbReference type="GeneID" id="3643913"/>
<dbReference type="KEGG" id="cal:CAALFM_C208610WA"/>
<dbReference type="CGD" id="CAL0000181444">
    <property type="gene designation" value="ERG9"/>
</dbReference>
<dbReference type="VEuPathDB" id="FungiDB:C2_08610W_A"/>
<dbReference type="eggNOG" id="KOG1459">
    <property type="taxonomic scope" value="Eukaryota"/>
</dbReference>
<dbReference type="InParanoid" id="A0A1D8PI71"/>
<dbReference type="OMA" id="GEACQLM"/>
<dbReference type="OrthoDB" id="431150at2759"/>
<dbReference type="UniPathway" id="UPA00767">
    <property type="reaction ID" value="UER00751"/>
</dbReference>
<dbReference type="Proteomes" id="UP000000559">
    <property type="component" value="Chromosome 2"/>
</dbReference>
<dbReference type="GO" id="GO:0005783">
    <property type="term" value="C:endoplasmic reticulum"/>
    <property type="evidence" value="ECO:0000250"/>
    <property type="project" value="CGD"/>
</dbReference>
<dbReference type="GO" id="GO:0005789">
    <property type="term" value="C:endoplasmic reticulum membrane"/>
    <property type="evidence" value="ECO:0000318"/>
    <property type="project" value="GO_Central"/>
</dbReference>
<dbReference type="GO" id="GO:0005886">
    <property type="term" value="C:plasma membrane"/>
    <property type="evidence" value="ECO:0000314"/>
    <property type="project" value="CGD"/>
</dbReference>
<dbReference type="GO" id="GO:0051996">
    <property type="term" value="F:squalene synthase [NAD(P)H] activity"/>
    <property type="evidence" value="ECO:0000318"/>
    <property type="project" value="GO_Central"/>
</dbReference>
<dbReference type="GO" id="GO:0006696">
    <property type="term" value="P:ergosterol biosynthetic process"/>
    <property type="evidence" value="ECO:0000250"/>
    <property type="project" value="CGD"/>
</dbReference>
<dbReference type="GO" id="GO:0045338">
    <property type="term" value="P:farnesyl diphosphate metabolic process"/>
    <property type="evidence" value="ECO:0000318"/>
    <property type="project" value="GO_Central"/>
</dbReference>
<dbReference type="GO" id="GO:1902767">
    <property type="term" value="P:isoprenoid biosynthetic process via mevalonate"/>
    <property type="evidence" value="ECO:0007669"/>
    <property type="project" value="EnsemblFungi"/>
</dbReference>
<dbReference type="CDD" id="cd00683">
    <property type="entry name" value="Trans_IPPS_HH"/>
    <property type="match status" value="1"/>
</dbReference>
<dbReference type="FunFam" id="1.10.600.10:FF:000003">
    <property type="entry name" value="Farnesyl-diphosphate farnesyltransferase 1"/>
    <property type="match status" value="1"/>
</dbReference>
<dbReference type="Gene3D" id="1.10.600.10">
    <property type="entry name" value="Farnesyl Diphosphate Synthase"/>
    <property type="match status" value="1"/>
</dbReference>
<dbReference type="InterPro" id="IPR008949">
    <property type="entry name" value="Isoprenoid_synthase_dom_sf"/>
</dbReference>
<dbReference type="InterPro" id="IPR002060">
    <property type="entry name" value="Squ/phyt_synthse"/>
</dbReference>
<dbReference type="InterPro" id="IPR006449">
    <property type="entry name" value="Squal_synth-like"/>
</dbReference>
<dbReference type="InterPro" id="IPR019845">
    <property type="entry name" value="Squalene/phytoene_synthase_CS"/>
</dbReference>
<dbReference type="InterPro" id="IPR044844">
    <property type="entry name" value="Trans_IPPS_euk-type"/>
</dbReference>
<dbReference type="InterPro" id="IPR033904">
    <property type="entry name" value="Trans_IPPS_HH"/>
</dbReference>
<dbReference type="NCBIfam" id="TIGR01559">
    <property type="entry name" value="squal_synth"/>
    <property type="match status" value="1"/>
</dbReference>
<dbReference type="PANTHER" id="PTHR11626">
    <property type="entry name" value="FARNESYL-DIPHOSPHATE FARNESYLTRANSFERASE"/>
    <property type="match status" value="1"/>
</dbReference>
<dbReference type="PANTHER" id="PTHR11626:SF2">
    <property type="entry name" value="SQUALENE SYNTHASE"/>
    <property type="match status" value="1"/>
</dbReference>
<dbReference type="Pfam" id="PF00494">
    <property type="entry name" value="SQS_PSY"/>
    <property type="match status" value="1"/>
</dbReference>
<dbReference type="SFLD" id="SFLDS00005">
    <property type="entry name" value="Isoprenoid_Synthase_Type_I"/>
    <property type="match status" value="1"/>
</dbReference>
<dbReference type="SFLD" id="SFLDG01018">
    <property type="entry name" value="Squalene/Phytoene_Synthase_Lik"/>
    <property type="match status" value="1"/>
</dbReference>
<dbReference type="SUPFAM" id="SSF48576">
    <property type="entry name" value="Terpenoid synthases"/>
    <property type="match status" value="1"/>
</dbReference>
<dbReference type="PROSITE" id="PS01044">
    <property type="entry name" value="SQUALEN_PHYTOEN_SYN_1"/>
    <property type="match status" value="1"/>
</dbReference>
<dbReference type="PROSITE" id="PS01045">
    <property type="entry name" value="SQUALEN_PHYTOEN_SYN_2"/>
    <property type="match status" value="1"/>
</dbReference>
<evidence type="ECO:0000250" key="1">
    <source>
        <dbReference type="UniProtKB" id="P29704"/>
    </source>
</evidence>
<evidence type="ECO:0000255" key="2"/>
<evidence type="ECO:0000269" key="3">
    <source>
    </source>
</evidence>
<evidence type="ECO:0000269" key="4">
    <source>
    </source>
</evidence>
<evidence type="ECO:0000303" key="5">
    <source>
    </source>
</evidence>
<evidence type="ECO:0000305" key="6"/>
<feature type="chain" id="PRO_0000454171" description="Squalene synthase ERG9">
    <location>
        <begin position="1"/>
        <end position="448"/>
    </location>
</feature>
<feature type="transmembrane region" description="Helical" evidence="2">
    <location>
        <begin position="428"/>
        <end position="448"/>
    </location>
</feature>
<reference key="1">
    <citation type="journal article" date="2004" name="Proc. Natl. Acad. Sci. U.S.A.">
        <title>The diploid genome sequence of Candida albicans.</title>
        <authorList>
            <person name="Jones T."/>
            <person name="Federspiel N.A."/>
            <person name="Chibana H."/>
            <person name="Dungan J."/>
            <person name="Kalman S."/>
            <person name="Magee B.B."/>
            <person name="Newport G."/>
            <person name="Thorstenson Y.R."/>
            <person name="Agabian N."/>
            <person name="Magee P.T."/>
            <person name="Davis R.W."/>
            <person name="Scherer S."/>
        </authorList>
    </citation>
    <scope>NUCLEOTIDE SEQUENCE [LARGE SCALE GENOMIC DNA]</scope>
    <source>
        <strain>SC5314 / ATCC MYA-2876</strain>
    </source>
</reference>
<reference key="2">
    <citation type="journal article" date="2007" name="Genome Biol.">
        <title>Assembly of the Candida albicans genome into sixteen supercontigs aligned on the eight chromosomes.</title>
        <authorList>
            <person name="van het Hoog M."/>
            <person name="Rast T.J."/>
            <person name="Martchenko M."/>
            <person name="Grindle S."/>
            <person name="Dignard D."/>
            <person name="Hogues H."/>
            <person name="Cuomo C."/>
            <person name="Berriman M."/>
            <person name="Scherer S."/>
            <person name="Magee B.B."/>
            <person name="Whiteway M."/>
            <person name="Chibana H."/>
            <person name="Nantel A."/>
            <person name="Magee P.T."/>
        </authorList>
    </citation>
    <scope>GENOME REANNOTATION</scope>
    <source>
        <strain>SC5314 / ATCC MYA-2876</strain>
    </source>
</reference>
<reference key="3">
    <citation type="journal article" date="2013" name="Genome Biol.">
        <title>Assembly of a phased diploid Candida albicans genome facilitates allele-specific measurements and provides a simple model for repeat and indel structure.</title>
        <authorList>
            <person name="Muzzey D."/>
            <person name="Schwartz K."/>
            <person name="Weissman J.S."/>
            <person name="Sherlock G."/>
        </authorList>
    </citation>
    <scope>NUCLEOTIDE SEQUENCE [LARGE SCALE GENOMIC DNA]</scope>
    <scope>GENOME REANNOTATION</scope>
    <source>
        <strain>SC5314 / ATCC MYA-2876</strain>
    </source>
</reference>
<reference key="4">
    <citation type="journal article" date="2003" name="Med. Mycol.">
        <title>Antifungal activity of fluconazole in combination with lovastatin and their effects on gene expression in the ergosterol and prenylation pathways in Candida albicans.</title>
        <authorList>
            <person name="Song J.L."/>
            <person name="Lyons C.N."/>
            <person name="Holleman S."/>
            <person name="Oliver B.G."/>
            <person name="White T.C."/>
        </authorList>
    </citation>
    <scope>INDUCTION</scope>
</reference>
<reference key="5">
    <citation type="journal article" date="2012" name="Cell">
        <title>A recently evolved transcriptional network controls biofilm development in Candida albicans.</title>
        <authorList>
            <person name="Nobile C.J."/>
            <person name="Fox E.P."/>
            <person name="Nett J.E."/>
            <person name="Sorrells T.R."/>
            <person name="Mitrovich Q.M."/>
            <person name="Hernday A.D."/>
            <person name="Tuch B.B."/>
            <person name="Andes D.R."/>
            <person name="Johnson A.D."/>
        </authorList>
    </citation>
    <scope>INDUCTION</scope>
</reference>
<proteinExistence type="evidence at transcript level"/>
<comment type="function">
    <text evidence="1 6">Squalene synthase; part of the third module of ergosterol biosynthesis pathway that includes the late steps of the pathway (By similarity). ERG9 produces squalene from 2 farnesyl pyrophosphate moieties (By similarity). The third module or late pathway involves the ergosterol synthesis itself through consecutive reactions that mainly occur in the endoplasmic reticulum (ER) membrane. Firstly, the squalene synthase ERG9 catalyzes the condensation of 2 farnesyl pyrophosphate moieties to form squalene, which is the precursor of all steroids. Squalene synthase is crucial for balancing the incorporation of farnesyl diphosphate (FPP) into sterol and nonsterol isoprene synthesis. Secondly, the squalene epoxidase ERG1 catalyzes the stereospecific oxidation of squalene to (S)-2,3-epoxysqualene, which is considered to be a rate-limiting enzyme in steroid biosynthesis. Then, the lanosterol synthase ERG7 catalyzes the cyclization of (S)-2,3 oxidosqualene to lanosterol, a reaction that forms the sterol core. In the next steps, lanosterol is transformed to zymosterol through a complex process involving various demethylation, reduction and desaturation reactions. The lanosterol 14-alpha-demethylase ERG11 (also known as CYP51) catalyzes C14-demethylation of lanosterol to produce 4,4'-dimethyl cholesta-8,14,24-triene-3-beta-ol, which is critical for ergosterol biosynthesis. The C-14 reductase ERG24 reduces the C14=C15 double bond of 4,4-dimethyl-cholesta-8,14,24-trienol to produce 4,4-dimethyl-cholesta-8,24-dienol. 4,4-dimethyl-cholesta-8,24-dienol is substrate of the C-4 demethylation complex ERG25-ERG26-ERG27 in which ERG25 catalyzes the three-step monooxygenation required for the demethylation of 4,4-dimethyl and 4alpha-methylsterols, ERG26 catalyzes the oxidative decarboxylation that results in a reduction of the 3-beta-hydroxy group at the C-3 carbon to an oxo group, and ERG27 is responsible for the reduction of the keto group on the C-3. ERG28 has a role as a scaffold to help anchor ERG25, ERG26 and ERG27 to the endoplasmic reticulum and ERG29 regulates the activity of the iron-containing C4-methylsterol oxidase ERG25. Then, the sterol 24-C-methyltransferase ERG6 catalyzes the methyl transfer from S-adenosyl-methionine to the C-24 of zymosterol to form fecosterol. The C-8 sterol isomerase ERG2 catalyzes the reaction which results in unsaturation at C-7 in the B ring of sterols and thus converts fecosterol to episterol. The sterol-C5-desaturase ERG3 then catalyzes the introduction of a C-5 double bond in the B ring to produce 5-dehydroepisterol. The C-22 sterol desaturase ERG5 further converts 5-dehydroepisterol into ergosta-5,7,22,24(28)-tetraen-3beta-ol by forming the C-22(23) double bond in the sterol side chain. Finally, ergosta-5,7,22,24(28)-tetraen-3beta-ol is substrate of the C-24(28) sterol reductase ERG4 to produce ergosterol (Probable).</text>
</comment>
<comment type="catalytic activity">
    <reaction evidence="1">
        <text>2 (2E,6E)-farnesyl diphosphate + NADPH + H(+) = squalene + 2 diphosphate + NADP(+)</text>
        <dbReference type="Rhea" id="RHEA:32295"/>
        <dbReference type="ChEBI" id="CHEBI:15378"/>
        <dbReference type="ChEBI" id="CHEBI:15440"/>
        <dbReference type="ChEBI" id="CHEBI:33019"/>
        <dbReference type="ChEBI" id="CHEBI:57783"/>
        <dbReference type="ChEBI" id="CHEBI:58349"/>
        <dbReference type="ChEBI" id="CHEBI:175763"/>
        <dbReference type="EC" id="2.5.1.21"/>
    </reaction>
    <physiologicalReaction direction="left-to-right" evidence="1">
        <dbReference type="Rhea" id="RHEA:32296"/>
    </physiologicalReaction>
</comment>
<comment type="catalytic activity">
    <reaction evidence="1">
        <text>2 (2E,6E)-farnesyl diphosphate + NADH + H(+) = squalene + 2 diphosphate + NAD(+)</text>
        <dbReference type="Rhea" id="RHEA:32299"/>
        <dbReference type="ChEBI" id="CHEBI:15378"/>
        <dbReference type="ChEBI" id="CHEBI:15440"/>
        <dbReference type="ChEBI" id="CHEBI:33019"/>
        <dbReference type="ChEBI" id="CHEBI:57540"/>
        <dbReference type="ChEBI" id="CHEBI:57945"/>
        <dbReference type="ChEBI" id="CHEBI:175763"/>
        <dbReference type="EC" id="2.5.1.21"/>
    </reaction>
    <physiologicalReaction direction="left-to-right" evidence="1">
        <dbReference type="Rhea" id="RHEA:32300"/>
    </physiologicalReaction>
</comment>
<comment type="cofactor">
    <cofactor evidence="1">
        <name>Mg(2+)</name>
        <dbReference type="ChEBI" id="CHEBI:18420"/>
    </cofactor>
</comment>
<comment type="pathway">
    <text evidence="1">Terpene metabolism; lanosterol biosynthesis; lanosterol from farnesyl diphosphate: step 1/3.</text>
</comment>
<comment type="subcellular location">
    <subcellularLocation>
        <location evidence="6">Endoplasmic reticulum membrane</location>
        <topology evidence="2">Single-pass membrane protein</topology>
    </subcellularLocation>
    <subcellularLocation>
        <location evidence="1">Microsome</location>
    </subcellularLocation>
</comment>
<comment type="induction">
    <text evidence="3 4">Expression is induced by lovastatin and fluconazole and is repressed by amphotericin B and caspofungin (PubMed:14653518). Expression is repressed during spider biofilm formation (PubMed:22265407).</text>
</comment>
<comment type="similarity">
    <text evidence="6">Belongs to the phytoene/squalene synthase family.</text>
</comment>
<protein>
    <recommendedName>
        <fullName evidence="5">Squalene synthase ERG9</fullName>
        <shortName evidence="6">SQS</shortName>
        <shortName evidence="6">SS</shortName>
        <ecNumber evidence="1">2.5.1.21</ecNumber>
    </recommendedName>
    <alternativeName>
        <fullName evidence="5">Ergosterol biosynthesis protein 9</fullName>
    </alternativeName>
    <alternativeName>
        <fullName evidence="6">FPP:FPP farnesyltransferase ERG9</fullName>
    </alternativeName>
    <alternativeName>
        <fullName evidence="6">Farnesyl-diphosphate farnesyltransferase ERG9</fullName>
    </alternativeName>
</protein>
<sequence length="448" mass="51230">MGKFLQLLSHPIELKAVIQLFGFRQPLHPGKRDVNDKELVRCYELLNLTSRSFAAVIEELHPELRDAVMIFYLVLRALDTIEDDMTIKSSIKIPLLREFDTKLNTKNWTFDGNGPNEKDRTVLVEFDKILNVYHRLKPQYQDIIKSITFKMGNGMADYILDEEFNVNGVATVEDYNLYCHYVAGLVGEGLTNLFVLANFGDKTLTENNFAKADSMGLFLQKTNIIRDYHEDLQDGRSFWPREIWSKYTENLQDFHKVKTPAKEFAGVSCINELVLNALGHVTDCLDYLSLVKDPSSFSFCAIPQVMAVATLAEVYNNPKVLHGVVKIRKGTTCRLILESRTLPGVVKIFKEYIQVINHKSSVRDPNYLKIGIKCGEIEQYCEMIYPNKQALPPSMKSLPENKFTKIVASRESIDLSVQRRIEQENFNCNVVLFGIGALILSLIYFVLY</sequence>
<keyword id="KW-0256">Endoplasmic reticulum</keyword>
<keyword id="KW-0444">Lipid biosynthesis</keyword>
<keyword id="KW-0443">Lipid metabolism</keyword>
<keyword id="KW-0460">Magnesium</keyword>
<keyword id="KW-0472">Membrane</keyword>
<keyword id="KW-0492">Microsome</keyword>
<keyword id="KW-0521">NADP</keyword>
<keyword id="KW-1185">Reference proteome</keyword>
<keyword id="KW-0752">Steroid biosynthesis</keyword>
<keyword id="KW-0753">Steroid metabolism</keyword>
<keyword id="KW-0756">Sterol biosynthesis</keyword>
<keyword id="KW-1207">Sterol metabolism</keyword>
<keyword id="KW-0808">Transferase</keyword>
<keyword id="KW-0812">Transmembrane</keyword>
<keyword id="KW-1133">Transmembrane helix</keyword>
<organism>
    <name type="scientific">Candida albicans (strain SC5314 / ATCC MYA-2876)</name>
    <name type="common">Yeast</name>
    <dbReference type="NCBI Taxonomy" id="237561"/>
    <lineage>
        <taxon>Eukaryota</taxon>
        <taxon>Fungi</taxon>
        <taxon>Dikarya</taxon>
        <taxon>Ascomycota</taxon>
        <taxon>Saccharomycotina</taxon>
        <taxon>Pichiomycetes</taxon>
        <taxon>Debaryomycetaceae</taxon>
        <taxon>Candida/Lodderomyces clade</taxon>
        <taxon>Candida</taxon>
    </lineage>
</organism>